<keyword id="KW-0474">Menaquinone biosynthesis</keyword>
<keyword id="KW-0489">Methyltransferase</keyword>
<keyword id="KW-0949">S-adenosyl-L-methionine</keyword>
<keyword id="KW-0808">Transferase</keyword>
<keyword id="KW-0831">Ubiquinone biosynthesis</keyword>
<name>UBIE_PSEU2</name>
<gene>
    <name evidence="1" type="primary">ubiE</name>
    <name type="ordered locus">Psyr_0389</name>
</gene>
<feature type="chain" id="PRO_1000056278" description="Ubiquinone/menaquinone biosynthesis C-methyltransferase UbiE">
    <location>
        <begin position="1"/>
        <end position="256"/>
    </location>
</feature>
<feature type="binding site" evidence="1">
    <location>
        <position position="79"/>
    </location>
    <ligand>
        <name>S-adenosyl-L-methionine</name>
        <dbReference type="ChEBI" id="CHEBI:59789"/>
    </ligand>
</feature>
<feature type="binding site" evidence="1">
    <location>
        <position position="100"/>
    </location>
    <ligand>
        <name>S-adenosyl-L-methionine</name>
        <dbReference type="ChEBI" id="CHEBI:59789"/>
    </ligand>
</feature>
<feature type="binding site" evidence="1">
    <location>
        <begin position="128"/>
        <end position="129"/>
    </location>
    <ligand>
        <name>S-adenosyl-L-methionine</name>
        <dbReference type="ChEBI" id="CHEBI:59789"/>
    </ligand>
</feature>
<dbReference type="EC" id="2.1.1.163" evidence="1"/>
<dbReference type="EC" id="2.1.1.201" evidence="1"/>
<dbReference type="EMBL" id="CP000075">
    <property type="protein sequence ID" value="AAY35459.1"/>
    <property type="molecule type" value="Genomic_DNA"/>
</dbReference>
<dbReference type="RefSeq" id="WP_002551635.1">
    <property type="nucleotide sequence ID" value="NC_007005.1"/>
</dbReference>
<dbReference type="RefSeq" id="YP_233497.1">
    <property type="nucleotide sequence ID" value="NC_007005.1"/>
</dbReference>
<dbReference type="SMR" id="Q4ZZG3"/>
<dbReference type="STRING" id="205918.Psyr_0389"/>
<dbReference type="GeneID" id="96216716"/>
<dbReference type="KEGG" id="psb:Psyr_0389"/>
<dbReference type="PATRIC" id="fig|205918.7.peg.402"/>
<dbReference type="eggNOG" id="COG2226">
    <property type="taxonomic scope" value="Bacteria"/>
</dbReference>
<dbReference type="HOGENOM" id="CLU_037990_0_0_6"/>
<dbReference type="OrthoDB" id="9808140at2"/>
<dbReference type="UniPathway" id="UPA00079">
    <property type="reaction ID" value="UER00169"/>
</dbReference>
<dbReference type="UniPathway" id="UPA00232"/>
<dbReference type="Proteomes" id="UP000000426">
    <property type="component" value="Chromosome"/>
</dbReference>
<dbReference type="GO" id="GO:0008425">
    <property type="term" value="F:2-methoxy-6-polyprenyl-1,4-benzoquinol methyltransferase activity"/>
    <property type="evidence" value="ECO:0007669"/>
    <property type="project" value="UniProtKB-UniRule"/>
</dbReference>
<dbReference type="GO" id="GO:0043770">
    <property type="term" value="F:demethylmenaquinone methyltransferase activity"/>
    <property type="evidence" value="ECO:0007669"/>
    <property type="project" value="UniProtKB-UniRule"/>
</dbReference>
<dbReference type="GO" id="GO:0009060">
    <property type="term" value="P:aerobic respiration"/>
    <property type="evidence" value="ECO:0007669"/>
    <property type="project" value="UniProtKB-UniRule"/>
</dbReference>
<dbReference type="GO" id="GO:0009234">
    <property type="term" value="P:menaquinone biosynthetic process"/>
    <property type="evidence" value="ECO:0007669"/>
    <property type="project" value="UniProtKB-UniRule"/>
</dbReference>
<dbReference type="GO" id="GO:0032259">
    <property type="term" value="P:methylation"/>
    <property type="evidence" value="ECO:0007669"/>
    <property type="project" value="UniProtKB-KW"/>
</dbReference>
<dbReference type="CDD" id="cd02440">
    <property type="entry name" value="AdoMet_MTases"/>
    <property type="match status" value="1"/>
</dbReference>
<dbReference type="FunFam" id="3.40.50.150:FF:000014">
    <property type="entry name" value="Ubiquinone/menaquinone biosynthesis C-methyltransferase UbiE"/>
    <property type="match status" value="1"/>
</dbReference>
<dbReference type="Gene3D" id="3.40.50.150">
    <property type="entry name" value="Vaccinia Virus protein VP39"/>
    <property type="match status" value="1"/>
</dbReference>
<dbReference type="HAMAP" id="MF_01813">
    <property type="entry name" value="MenG_UbiE_methyltr"/>
    <property type="match status" value="1"/>
</dbReference>
<dbReference type="InterPro" id="IPR029063">
    <property type="entry name" value="SAM-dependent_MTases_sf"/>
</dbReference>
<dbReference type="InterPro" id="IPR004033">
    <property type="entry name" value="UbiE/COQ5_MeTrFase"/>
</dbReference>
<dbReference type="InterPro" id="IPR023576">
    <property type="entry name" value="UbiE/COQ5_MeTrFase_CS"/>
</dbReference>
<dbReference type="NCBIfam" id="TIGR01934">
    <property type="entry name" value="MenG_MenH_UbiE"/>
    <property type="match status" value="1"/>
</dbReference>
<dbReference type="NCBIfam" id="NF001240">
    <property type="entry name" value="PRK00216.1-1"/>
    <property type="match status" value="1"/>
</dbReference>
<dbReference type="NCBIfam" id="NF001244">
    <property type="entry name" value="PRK00216.1-5"/>
    <property type="match status" value="1"/>
</dbReference>
<dbReference type="PANTHER" id="PTHR43591:SF24">
    <property type="entry name" value="2-METHOXY-6-POLYPRENYL-1,4-BENZOQUINOL METHYLASE, MITOCHONDRIAL"/>
    <property type="match status" value="1"/>
</dbReference>
<dbReference type="PANTHER" id="PTHR43591">
    <property type="entry name" value="METHYLTRANSFERASE"/>
    <property type="match status" value="1"/>
</dbReference>
<dbReference type="Pfam" id="PF01209">
    <property type="entry name" value="Ubie_methyltran"/>
    <property type="match status" value="1"/>
</dbReference>
<dbReference type="SUPFAM" id="SSF53335">
    <property type="entry name" value="S-adenosyl-L-methionine-dependent methyltransferases"/>
    <property type="match status" value="1"/>
</dbReference>
<dbReference type="PROSITE" id="PS51608">
    <property type="entry name" value="SAM_MT_UBIE"/>
    <property type="match status" value="1"/>
</dbReference>
<dbReference type="PROSITE" id="PS01183">
    <property type="entry name" value="UBIE_1"/>
    <property type="match status" value="1"/>
</dbReference>
<dbReference type="PROSITE" id="PS01184">
    <property type="entry name" value="UBIE_2"/>
    <property type="match status" value="1"/>
</dbReference>
<sequence>MNDQRKGSDAEPTTHFGYKNVPESQKAEKVAEVFHSVAAKYDLMNDLLSGGMHRLWKRFAIELSGVRTGNRVLDIAGGTGDLTRKFSNLVGPTGQVVLADINASMLKVGRDRLLDLGVSGNVEFVQADAEKLPFPDNHFDCVTIAFGLRNVTHKEDALRSMLRVLKPGGRLLVLEFSKPTNKLMSKAYDAYSFAFMPLMGKLVTNDSESYRYLAESIRMHPNQETLKSMMVEAGFDRVTYHNMTAGVVALHRGIKP</sequence>
<accession>Q4ZZG3</accession>
<evidence type="ECO:0000255" key="1">
    <source>
        <dbReference type="HAMAP-Rule" id="MF_01813"/>
    </source>
</evidence>
<organism>
    <name type="scientific">Pseudomonas syringae pv. syringae (strain B728a)</name>
    <dbReference type="NCBI Taxonomy" id="205918"/>
    <lineage>
        <taxon>Bacteria</taxon>
        <taxon>Pseudomonadati</taxon>
        <taxon>Pseudomonadota</taxon>
        <taxon>Gammaproteobacteria</taxon>
        <taxon>Pseudomonadales</taxon>
        <taxon>Pseudomonadaceae</taxon>
        <taxon>Pseudomonas</taxon>
        <taxon>Pseudomonas syringae</taxon>
    </lineage>
</organism>
<proteinExistence type="inferred from homology"/>
<reference key="1">
    <citation type="journal article" date="2005" name="Proc. Natl. Acad. Sci. U.S.A.">
        <title>Comparison of the complete genome sequences of Pseudomonas syringae pv. syringae B728a and pv. tomato DC3000.</title>
        <authorList>
            <person name="Feil H."/>
            <person name="Feil W.S."/>
            <person name="Chain P."/>
            <person name="Larimer F."/>
            <person name="Dibartolo G."/>
            <person name="Copeland A."/>
            <person name="Lykidis A."/>
            <person name="Trong S."/>
            <person name="Nolan M."/>
            <person name="Goltsman E."/>
            <person name="Thiel J."/>
            <person name="Malfatti S."/>
            <person name="Loper J.E."/>
            <person name="Lapidus A."/>
            <person name="Detter J.C."/>
            <person name="Land M."/>
            <person name="Richardson P.M."/>
            <person name="Kyrpides N.C."/>
            <person name="Ivanova N."/>
            <person name="Lindow S.E."/>
        </authorList>
    </citation>
    <scope>NUCLEOTIDE SEQUENCE [LARGE SCALE GENOMIC DNA]</scope>
    <source>
        <strain>B728a</strain>
    </source>
</reference>
<protein>
    <recommendedName>
        <fullName evidence="1">Ubiquinone/menaquinone biosynthesis C-methyltransferase UbiE</fullName>
        <ecNumber evidence="1">2.1.1.163</ecNumber>
        <ecNumber evidence="1">2.1.1.201</ecNumber>
    </recommendedName>
    <alternativeName>
        <fullName evidence="1">2-methoxy-6-polyprenyl-1,4-benzoquinol methylase</fullName>
    </alternativeName>
    <alternativeName>
        <fullName evidence="1">Demethylmenaquinone methyltransferase</fullName>
    </alternativeName>
</protein>
<comment type="function">
    <text evidence="1">Methyltransferase required for the conversion of demethylmenaquinol (DMKH2) to menaquinol (MKH2) and the conversion of 2-polyprenyl-6-methoxy-1,4-benzoquinol (DDMQH2) to 2-polyprenyl-3-methyl-6-methoxy-1,4-benzoquinol (DMQH2).</text>
</comment>
<comment type="catalytic activity">
    <reaction evidence="1">
        <text>a 2-demethylmenaquinol + S-adenosyl-L-methionine = a menaquinol + S-adenosyl-L-homocysteine + H(+)</text>
        <dbReference type="Rhea" id="RHEA:42640"/>
        <dbReference type="Rhea" id="RHEA-COMP:9539"/>
        <dbReference type="Rhea" id="RHEA-COMP:9563"/>
        <dbReference type="ChEBI" id="CHEBI:15378"/>
        <dbReference type="ChEBI" id="CHEBI:18151"/>
        <dbReference type="ChEBI" id="CHEBI:55437"/>
        <dbReference type="ChEBI" id="CHEBI:57856"/>
        <dbReference type="ChEBI" id="CHEBI:59789"/>
        <dbReference type="EC" id="2.1.1.163"/>
    </reaction>
</comment>
<comment type="catalytic activity">
    <reaction evidence="1">
        <text>a 2-methoxy-6-(all-trans-polyprenyl)benzene-1,4-diol + S-adenosyl-L-methionine = a 5-methoxy-2-methyl-3-(all-trans-polyprenyl)benzene-1,4-diol + S-adenosyl-L-homocysteine + H(+)</text>
        <dbReference type="Rhea" id="RHEA:28286"/>
        <dbReference type="Rhea" id="RHEA-COMP:10858"/>
        <dbReference type="Rhea" id="RHEA-COMP:10859"/>
        <dbReference type="ChEBI" id="CHEBI:15378"/>
        <dbReference type="ChEBI" id="CHEBI:57856"/>
        <dbReference type="ChEBI" id="CHEBI:59789"/>
        <dbReference type="ChEBI" id="CHEBI:84166"/>
        <dbReference type="ChEBI" id="CHEBI:84167"/>
        <dbReference type="EC" id="2.1.1.201"/>
    </reaction>
</comment>
<comment type="pathway">
    <text evidence="1">Quinol/quinone metabolism; menaquinone biosynthesis; menaquinol from 1,4-dihydroxy-2-naphthoate: step 2/2.</text>
</comment>
<comment type="pathway">
    <text evidence="1">Cofactor biosynthesis; ubiquinone biosynthesis.</text>
</comment>
<comment type="similarity">
    <text evidence="1">Belongs to the class I-like SAM-binding methyltransferase superfamily. MenG/UbiE family.</text>
</comment>